<accession>Q5ZLY0</accession>
<sequence>MALEVRRMEGDVEDGELSDSDSDMPGAGSPRERQQKSNDGSNAGRPFQSSISSGVPDVPYRTTKSVDSSDESFSESDDDSSLWKRKRQKCFNFPPAKCEPFPLNQSHAKQTALGGKKVNNIWGMVLQEQNQDAVATELGILGMDGSIDRSRQSETYNYLLAKKLMKEAQQKEAETLDKELDEYMHDDKKTLPAEEENGQGFLKRKRSVKDRLGERQEMKYKGRYEITEEDSEEKVADEIAYRLCEPKKDLIARVVKIIGKRKAIELLMETAEVEQNGGLFIVNGTRRRTPGGVYLNLLKNTPSIKEEQIKEIFYLENQKEYENKKAAKKRRIQVLGKKMKKAIKGLNLQEYDDASRETFASDTNEALASLDDLQDGHHEAKMEHEDIIEIDNAHDLEIF</sequence>
<protein>
    <recommendedName>
        <fullName>Phosphorylated adapter RNA export protein</fullName>
    </recommendedName>
    <alternativeName>
        <fullName>RNA U small nuclear RNA export adapter protein</fullName>
    </alternativeName>
</protein>
<comment type="function">
    <text>Probably involved in protein and RNA export from the nucleus.</text>
</comment>
<comment type="subcellular location">
    <subcellularLocation>
        <location evidence="1">Nucleus</location>
    </subcellularLocation>
    <subcellularLocation>
        <location evidence="1">Cytoplasm</location>
    </subcellularLocation>
</comment>
<comment type="similarity">
    <text evidence="3">Belongs to the PHAX family.</text>
</comment>
<gene>
    <name type="primary">PHAX</name>
    <name type="synonym">RNUXA</name>
    <name type="ORF">RCJMB04_4h18</name>
</gene>
<organism>
    <name type="scientific">Gallus gallus</name>
    <name type="common">Chicken</name>
    <dbReference type="NCBI Taxonomy" id="9031"/>
    <lineage>
        <taxon>Eukaryota</taxon>
        <taxon>Metazoa</taxon>
        <taxon>Chordata</taxon>
        <taxon>Craniata</taxon>
        <taxon>Vertebrata</taxon>
        <taxon>Euteleostomi</taxon>
        <taxon>Archelosauria</taxon>
        <taxon>Archosauria</taxon>
        <taxon>Dinosauria</taxon>
        <taxon>Saurischia</taxon>
        <taxon>Theropoda</taxon>
        <taxon>Coelurosauria</taxon>
        <taxon>Aves</taxon>
        <taxon>Neognathae</taxon>
        <taxon>Galloanserae</taxon>
        <taxon>Galliformes</taxon>
        <taxon>Phasianidae</taxon>
        <taxon>Phasianinae</taxon>
        <taxon>Gallus</taxon>
    </lineage>
</organism>
<keyword id="KW-0963">Cytoplasm</keyword>
<keyword id="KW-0539">Nucleus</keyword>
<keyword id="KW-0653">Protein transport</keyword>
<keyword id="KW-1185">Reference proteome</keyword>
<keyword id="KW-0694">RNA-binding</keyword>
<keyword id="KW-0813">Transport</keyword>
<reference key="1">
    <citation type="journal article" date="2005" name="Genome Biol.">
        <title>Full-length cDNAs from chicken bursal lymphocytes to facilitate gene function analysis.</title>
        <authorList>
            <person name="Caldwell R.B."/>
            <person name="Kierzek A.M."/>
            <person name="Arakawa H."/>
            <person name="Bezzubov Y."/>
            <person name="Zaim J."/>
            <person name="Fiedler P."/>
            <person name="Kutter S."/>
            <person name="Blagodatski A."/>
            <person name="Kostovska D."/>
            <person name="Koter M."/>
            <person name="Plachy J."/>
            <person name="Carninci P."/>
            <person name="Hayashizaki Y."/>
            <person name="Buerstedde J.-M."/>
        </authorList>
    </citation>
    <scope>NUCLEOTIDE SEQUENCE [LARGE SCALE MRNA]</scope>
    <source>
        <strain>CB</strain>
        <tissue>Bursa of Fabricius</tissue>
    </source>
</reference>
<feature type="chain" id="PRO_0000239778" description="Phosphorylated adapter RNA export protein">
    <location>
        <begin position="1"/>
        <end position="399"/>
    </location>
</feature>
<feature type="region of interest" description="Disordered" evidence="2">
    <location>
        <begin position="1"/>
        <end position="83"/>
    </location>
</feature>
<feature type="compositionally biased region" description="Basic and acidic residues" evidence="2">
    <location>
        <begin position="1"/>
        <end position="10"/>
    </location>
</feature>
<feature type="compositionally biased region" description="Acidic residues" evidence="2">
    <location>
        <begin position="11"/>
        <end position="22"/>
    </location>
</feature>
<feature type="compositionally biased region" description="Polar residues" evidence="2">
    <location>
        <begin position="37"/>
        <end position="53"/>
    </location>
</feature>
<feature type="compositionally biased region" description="Acidic residues" evidence="2">
    <location>
        <begin position="68"/>
        <end position="80"/>
    </location>
</feature>
<dbReference type="EMBL" id="AJ719604">
    <property type="protein sequence ID" value="CAG31263.1"/>
    <property type="molecule type" value="mRNA"/>
</dbReference>
<dbReference type="RefSeq" id="NP_001006575.1">
    <property type="nucleotide sequence ID" value="NM_001006575.2"/>
</dbReference>
<dbReference type="SMR" id="Q5ZLY0"/>
<dbReference type="FunCoup" id="Q5ZLY0">
    <property type="interactions" value="1311"/>
</dbReference>
<dbReference type="STRING" id="9031.ENSGALP00000023634"/>
<dbReference type="PaxDb" id="9031-ENSGALP00000023634"/>
<dbReference type="GeneID" id="427124"/>
<dbReference type="KEGG" id="gga:427124"/>
<dbReference type="CTD" id="51808"/>
<dbReference type="VEuPathDB" id="HostDB:geneid_427124"/>
<dbReference type="eggNOG" id="KOG3948">
    <property type="taxonomic scope" value="Eukaryota"/>
</dbReference>
<dbReference type="InParanoid" id="Q5ZLY0"/>
<dbReference type="OrthoDB" id="20573at2759"/>
<dbReference type="PhylomeDB" id="Q5ZLY0"/>
<dbReference type="PRO" id="PR:Q5ZLY0"/>
<dbReference type="Proteomes" id="UP000000539">
    <property type="component" value="Unassembled WGS sequence"/>
</dbReference>
<dbReference type="GO" id="GO:0005737">
    <property type="term" value="C:cytoplasm"/>
    <property type="evidence" value="ECO:0007669"/>
    <property type="project" value="UniProtKB-SubCell"/>
</dbReference>
<dbReference type="GO" id="GO:0005634">
    <property type="term" value="C:nucleus"/>
    <property type="evidence" value="ECO:0000318"/>
    <property type="project" value="GO_Central"/>
</dbReference>
<dbReference type="GO" id="GO:0003723">
    <property type="term" value="F:RNA binding"/>
    <property type="evidence" value="ECO:0007669"/>
    <property type="project" value="UniProtKB-KW"/>
</dbReference>
<dbReference type="GO" id="GO:0015031">
    <property type="term" value="P:protein transport"/>
    <property type="evidence" value="ECO:0007669"/>
    <property type="project" value="UniProtKB-KW"/>
</dbReference>
<dbReference type="GO" id="GO:0006408">
    <property type="term" value="P:snRNA export from nucleus"/>
    <property type="evidence" value="ECO:0000318"/>
    <property type="project" value="GO_Central"/>
</dbReference>
<dbReference type="FunFam" id="1.10.10.1440:FF:000001">
    <property type="entry name" value="phosphorylated adapter RNA export protein-like"/>
    <property type="match status" value="1"/>
</dbReference>
<dbReference type="Gene3D" id="1.10.10.1440">
    <property type="entry name" value="PHAX RNA-binding domain"/>
    <property type="match status" value="1"/>
</dbReference>
<dbReference type="InterPro" id="IPR039047">
    <property type="entry name" value="PHAX"/>
</dbReference>
<dbReference type="InterPro" id="IPR019385">
    <property type="entry name" value="PHAX_RNA-binding_domain"/>
</dbReference>
<dbReference type="InterPro" id="IPR038092">
    <property type="entry name" value="PHAX_RNA-binding_sf"/>
</dbReference>
<dbReference type="PANTHER" id="PTHR13135">
    <property type="entry name" value="CYTOSOLIC RESINIFERATOXIN BINDING PROTEIN RBP-26"/>
    <property type="match status" value="1"/>
</dbReference>
<dbReference type="PANTHER" id="PTHR13135:SF0">
    <property type="entry name" value="PHOSPHORYLATED ADAPTER RNA EXPORT PROTEIN"/>
    <property type="match status" value="1"/>
</dbReference>
<dbReference type="Pfam" id="PF10258">
    <property type="entry name" value="PHAX_RNA-bd"/>
    <property type="match status" value="1"/>
</dbReference>
<proteinExistence type="evidence at transcript level"/>
<evidence type="ECO:0000250" key="1"/>
<evidence type="ECO:0000256" key="2">
    <source>
        <dbReference type="SAM" id="MobiDB-lite"/>
    </source>
</evidence>
<evidence type="ECO:0000305" key="3"/>
<name>PHAX_CHICK</name>